<protein>
    <recommendedName>
        <fullName>Nck-associated protein 5-like</fullName>
    </recommendedName>
    <alternativeName>
        <fullName evidence="1">Centrosomal protein of 169 kDa</fullName>
        <shortName evidence="1">Cep169</shortName>
    </alternativeName>
</protein>
<proteinExistence type="evidence at protein level"/>
<dbReference type="EMBL" id="BC026468">
    <property type="protein sequence ID" value="AAH26468.1"/>
    <property type="molecule type" value="mRNA"/>
</dbReference>
<dbReference type="EMBL" id="BC072572">
    <property type="protein sequence ID" value="AAH72572.1"/>
    <property type="molecule type" value="mRNA"/>
</dbReference>
<dbReference type="EMBL" id="AK048721">
    <property type="protein sequence ID" value="BAC33433.1"/>
    <property type="molecule type" value="mRNA"/>
</dbReference>
<dbReference type="CCDS" id="CCDS27820.1"/>
<dbReference type="RefSeq" id="NP_001001884.1">
    <property type="nucleotide sequence ID" value="NM_001001884.2"/>
</dbReference>
<dbReference type="RefSeq" id="NP_001390483.1">
    <property type="nucleotide sequence ID" value="NM_001403554.1"/>
</dbReference>
<dbReference type="RefSeq" id="XP_006521186.1">
    <property type="nucleotide sequence ID" value="XM_006521123.3"/>
</dbReference>
<dbReference type="RefSeq" id="XP_036015370.1">
    <property type="nucleotide sequence ID" value="XM_036159477.1"/>
</dbReference>
<dbReference type="RefSeq" id="XP_036015371.1">
    <property type="nucleotide sequence ID" value="XM_036159478.1"/>
</dbReference>
<dbReference type="SMR" id="Q6GQX2"/>
<dbReference type="BioGRID" id="237726">
    <property type="interactions" value="4"/>
</dbReference>
<dbReference type="FunCoup" id="Q6GQX2">
    <property type="interactions" value="208"/>
</dbReference>
<dbReference type="STRING" id="10090.ENSMUSP00000023747"/>
<dbReference type="GlyGen" id="Q6GQX2">
    <property type="glycosylation" value="5 sites, 1 O-linked glycan (3 sites)"/>
</dbReference>
<dbReference type="iPTMnet" id="Q6GQX2"/>
<dbReference type="PhosphoSitePlus" id="Q6GQX2"/>
<dbReference type="jPOST" id="Q6GQX2"/>
<dbReference type="PaxDb" id="10090-ENSMUSP00000023747"/>
<dbReference type="PeptideAtlas" id="Q6GQX2"/>
<dbReference type="ProteomicsDB" id="293531"/>
<dbReference type="Antibodypedia" id="49270">
    <property type="antibodies" value="26 antibodies from 14 providers"/>
</dbReference>
<dbReference type="Ensembl" id="ENSMUST00000023747.14">
    <property type="protein sequence ID" value="ENSMUSP00000023747.8"/>
    <property type="gene ID" value="ENSMUSG00000023009.15"/>
</dbReference>
<dbReference type="GeneID" id="380969"/>
<dbReference type="KEGG" id="mmu:380969"/>
<dbReference type="UCSC" id="uc007xpn.1">
    <property type="organism name" value="mouse"/>
</dbReference>
<dbReference type="AGR" id="MGI:3609653"/>
<dbReference type="CTD" id="57701"/>
<dbReference type="MGI" id="MGI:3609653">
    <property type="gene designation" value="Nckap5l"/>
</dbReference>
<dbReference type="VEuPathDB" id="HostDB:ENSMUSG00000023009"/>
<dbReference type="eggNOG" id="ENOG502RB0P">
    <property type="taxonomic scope" value="Eukaryota"/>
</dbReference>
<dbReference type="GeneTree" id="ENSGT00530000063607"/>
<dbReference type="HOGENOM" id="CLU_007601_0_0_1"/>
<dbReference type="InParanoid" id="Q6GQX2"/>
<dbReference type="OMA" id="SWPACGP"/>
<dbReference type="OrthoDB" id="8930856at2759"/>
<dbReference type="PhylomeDB" id="Q6GQX2"/>
<dbReference type="TreeFam" id="TF331208"/>
<dbReference type="BioGRID-ORCS" id="380969">
    <property type="hits" value="3 hits in 75 CRISPR screens"/>
</dbReference>
<dbReference type="ChiTaRS" id="Nckap5l">
    <property type="organism name" value="mouse"/>
</dbReference>
<dbReference type="PRO" id="PR:Q6GQX2"/>
<dbReference type="Proteomes" id="UP000000589">
    <property type="component" value="Chromosome 15"/>
</dbReference>
<dbReference type="RNAct" id="Q6GQX2">
    <property type="molecule type" value="protein"/>
</dbReference>
<dbReference type="Bgee" id="ENSMUSG00000023009">
    <property type="expression patterns" value="Expressed in embryonic post-anal tail and 107 other cell types or tissues"/>
</dbReference>
<dbReference type="ExpressionAtlas" id="Q6GQX2">
    <property type="expression patterns" value="baseline and differential"/>
</dbReference>
<dbReference type="GO" id="GO:0005813">
    <property type="term" value="C:centrosome"/>
    <property type="evidence" value="ECO:0000250"/>
    <property type="project" value="UniProtKB"/>
</dbReference>
<dbReference type="GO" id="GO:0005737">
    <property type="term" value="C:cytoplasm"/>
    <property type="evidence" value="ECO:0007669"/>
    <property type="project" value="UniProtKB-KW"/>
</dbReference>
<dbReference type="GO" id="GO:0035371">
    <property type="term" value="C:microtubule plus-end"/>
    <property type="evidence" value="ECO:0000250"/>
    <property type="project" value="UniProtKB"/>
</dbReference>
<dbReference type="GO" id="GO:0001578">
    <property type="term" value="P:microtubule bundle formation"/>
    <property type="evidence" value="ECO:0000250"/>
    <property type="project" value="UniProtKB"/>
</dbReference>
<dbReference type="GO" id="GO:0007019">
    <property type="term" value="P:microtubule depolymerization"/>
    <property type="evidence" value="ECO:0000250"/>
    <property type="project" value="UniProtKB"/>
</dbReference>
<dbReference type="InterPro" id="IPR032769">
    <property type="entry name" value="NCKAP5_C"/>
</dbReference>
<dbReference type="InterPro" id="IPR026163">
    <property type="entry name" value="Nckap5l"/>
</dbReference>
<dbReference type="PANTHER" id="PTHR21740">
    <property type="entry name" value="NCK-ASSOCIATED PROTEIN 5"/>
    <property type="match status" value="1"/>
</dbReference>
<dbReference type="PANTHER" id="PTHR21740:SF3">
    <property type="entry name" value="NCK-ASSOCIATED PROTEIN 5-LIKE"/>
    <property type="match status" value="1"/>
</dbReference>
<dbReference type="Pfam" id="PF15246">
    <property type="entry name" value="NCKAP5"/>
    <property type="match status" value="1"/>
</dbReference>
<gene>
    <name type="primary">Nckap5l</name>
    <name evidence="1" type="synonym">Cep169</name>
</gene>
<name>NCK5L_MOUSE</name>
<evidence type="ECO:0000250" key="1">
    <source>
        <dbReference type="UniProtKB" id="Q9HCH0"/>
    </source>
</evidence>
<evidence type="ECO:0000255" key="2"/>
<evidence type="ECO:0000256" key="3">
    <source>
        <dbReference type="SAM" id="MobiDB-lite"/>
    </source>
</evidence>
<evidence type="ECO:0000305" key="4"/>
<reference key="1">
    <citation type="journal article" date="2004" name="Genome Res.">
        <title>The status, quality, and expansion of the NIH full-length cDNA project: the Mammalian Gene Collection (MGC).</title>
        <authorList>
            <consortium name="The MGC Project Team"/>
        </authorList>
    </citation>
    <scope>NUCLEOTIDE SEQUENCE [LARGE SCALE MRNA]</scope>
    <source>
        <strain>C57BL/6J</strain>
        <strain>FVB/N</strain>
        <tissue>Brain</tissue>
        <tissue>Mammary tumor</tissue>
    </source>
</reference>
<reference key="2">
    <citation type="journal article" date="2005" name="Science">
        <title>The transcriptional landscape of the mammalian genome.</title>
        <authorList>
            <person name="Carninci P."/>
            <person name="Kasukawa T."/>
            <person name="Katayama S."/>
            <person name="Gough J."/>
            <person name="Frith M.C."/>
            <person name="Maeda N."/>
            <person name="Oyama R."/>
            <person name="Ravasi T."/>
            <person name="Lenhard B."/>
            <person name="Wells C."/>
            <person name="Kodzius R."/>
            <person name="Shimokawa K."/>
            <person name="Bajic V.B."/>
            <person name="Brenner S.E."/>
            <person name="Batalov S."/>
            <person name="Forrest A.R."/>
            <person name="Zavolan M."/>
            <person name="Davis M.J."/>
            <person name="Wilming L.G."/>
            <person name="Aidinis V."/>
            <person name="Allen J.E."/>
            <person name="Ambesi-Impiombato A."/>
            <person name="Apweiler R."/>
            <person name="Aturaliya R.N."/>
            <person name="Bailey T.L."/>
            <person name="Bansal M."/>
            <person name="Baxter L."/>
            <person name="Beisel K.W."/>
            <person name="Bersano T."/>
            <person name="Bono H."/>
            <person name="Chalk A.M."/>
            <person name="Chiu K.P."/>
            <person name="Choudhary V."/>
            <person name="Christoffels A."/>
            <person name="Clutterbuck D.R."/>
            <person name="Crowe M.L."/>
            <person name="Dalla E."/>
            <person name="Dalrymple B.P."/>
            <person name="de Bono B."/>
            <person name="Della Gatta G."/>
            <person name="di Bernardo D."/>
            <person name="Down T."/>
            <person name="Engstrom P."/>
            <person name="Fagiolini M."/>
            <person name="Faulkner G."/>
            <person name="Fletcher C.F."/>
            <person name="Fukushima T."/>
            <person name="Furuno M."/>
            <person name="Futaki S."/>
            <person name="Gariboldi M."/>
            <person name="Georgii-Hemming P."/>
            <person name="Gingeras T.R."/>
            <person name="Gojobori T."/>
            <person name="Green R.E."/>
            <person name="Gustincich S."/>
            <person name="Harbers M."/>
            <person name="Hayashi Y."/>
            <person name="Hensch T.K."/>
            <person name="Hirokawa N."/>
            <person name="Hill D."/>
            <person name="Huminiecki L."/>
            <person name="Iacono M."/>
            <person name="Ikeo K."/>
            <person name="Iwama A."/>
            <person name="Ishikawa T."/>
            <person name="Jakt M."/>
            <person name="Kanapin A."/>
            <person name="Katoh M."/>
            <person name="Kawasawa Y."/>
            <person name="Kelso J."/>
            <person name="Kitamura H."/>
            <person name="Kitano H."/>
            <person name="Kollias G."/>
            <person name="Krishnan S.P."/>
            <person name="Kruger A."/>
            <person name="Kummerfeld S.K."/>
            <person name="Kurochkin I.V."/>
            <person name="Lareau L.F."/>
            <person name="Lazarevic D."/>
            <person name="Lipovich L."/>
            <person name="Liu J."/>
            <person name="Liuni S."/>
            <person name="McWilliam S."/>
            <person name="Madan Babu M."/>
            <person name="Madera M."/>
            <person name="Marchionni L."/>
            <person name="Matsuda H."/>
            <person name="Matsuzawa S."/>
            <person name="Miki H."/>
            <person name="Mignone F."/>
            <person name="Miyake S."/>
            <person name="Morris K."/>
            <person name="Mottagui-Tabar S."/>
            <person name="Mulder N."/>
            <person name="Nakano N."/>
            <person name="Nakauchi H."/>
            <person name="Ng P."/>
            <person name="Nilsson R."/>
            <person name="Nishiguchi S."/>
            <person name="Nishikawa S."/>
            <person name="Nori F."/>
            <person name="Ohara O."/>
            <person name="Okazaki Y."/>
            <person name="Orlando V."/>
            <person name="Pang K.C."/>
            <person name="Pavan W.J."/>
            <person name="Pavesi G."/>
            <person name="Pesole G."/>
            <person name="Petrovsky N."/>
            <person name="Piazza S."/>
            <person name="Reed J."/>
            <person name="Reid J.F."/>
            <person name="Ring B.Z."/>
            <person name="Ringwald M."/>
            <person name="Rost B."/>
            <person name="Ruan Y."/>
            <person name="Salzberg S.L."/>
            <person name="Sandelin A."/>
            <person name="Schneider C."/>
            <person name="Schoenbach C."/>
            <person name="Sekiguchi K."/>
            <person name="Semple C.A."/>
            <person name="Seno S."/>
            <person name="Sessa L."/>
            <person name="Sheng Y."/>
            <person name="Shibata Y."/>
            <person name="Shimada H."/>
            <person name="Shimada K."/>
            <person name="Silva D."/>
            <person name="Sinclair B."/>
            <person name="Sperling S."/>
            <person name="Stupka E."/>
            <person name="Sugiura K."/>
            <person name="Sultana R."/>
            <person name="Takenaka Y."/>
            <person name="Taki K."/>
            <person name="Tammoja K."/>
            <person name="Tan S.L."/>
            <person name="Tang S."/>
            <person name="Taylor M.S."/>
            <person name="Tegner J."/>
            <person name="Teichmann S.A."/>
            <person name="Ueda H.R."/>
            <person name="van Nimwegen E."/>
            <person name="Verardo R."/>
            <person name="Wei C.L."/>
            <person name="Yagi K."/>
            <person name="Yamanishi H."/>
            <person name="Zabarovsky E."/>
            <person name="Zhu S."/>
            <person name="Zimmer A."/>
            <person name="Hide W."/>
            <person name="Bult C."/>
            <person name="Grimmond S.M."/>
            <person name="Teasdale R.D."/>
            <person name="Liu E.T."/>
            <person name="Brusic V."/>
            <person name="Quackenbush J."/>
            <person name="Wahlestedt C."/>
            <person name="Mattick J.S."/>
            <person name="Hume D.A."/>
            <person name="Kai C."/>
            <person name="Sasaki D."/>
            <person name="Tomaru Y."/>
            <person name="Fukuda S."/>
            <person name="Kanamori-Katayama M."/>
            <person name="Suzuki M."/>
            <person name="Aoki J."/>
            <person name="Arakawa T."/>
            <person name="Iida J."/>
            <person name="Imamura K."/>
            <person name="Itoh M."/>
            <person name="Kato T."/>
            <person name="Kawaji H."/>
            <person name="Kawagashira N."/>
            <person name="Kawashima T."/>
            <person name="Kojima M."/>
            <person name="Kondo S."/>
            <person name="Konno H."/>
            <person name="Nakano K."/>
            <person name="Ninomiya N."/>
            <person name="Nishio T."/>
            <person name="Okada M."/>
            <person name="Plessy C."/>
            <person name="Shibata K."/>
            <person name="Shiraki T."/>
            <person name="Suzuki S."/>
            <person name="Tagami M."/>
            <person name="Waki K."/>
            <person name="Watahiki A."/>
            <person name="Okamura-Oho Y."/>
            <person name="Suzuki H."/>
            <person name="Kawai J."/>
            <person name="Hayashizaki Y."/>
        </authorList>
    </citation>
    <scope>NUCLEOTIDE SEQUENCE [LARGE SCALE MRNA] OF 752-1323</scope>
    <source>
        <strain>C57BL/6J</strain>
        <tissue>Cerebellum</tissue>
    </source>
</reference>
<reference key="3">
    <citation type="journal article" date="2010" name="Cell">
        <title>A tissue-specific atlas of mouse protein phosphorylation and expression.</title>
        <authorList>
            <person name="Huttlin E.L."/>
            <person name="Jedrychowski M.P."/>
            <person name="Elias J.E."/>
            <person name="Goswami T."/>
            <person name="Rad R."/>
            <person name="Beausoleil S.A."/>
            <person name="Villen J."/>
            <person name="Haas W."/>
            <person name="Sowa M.E."/>
            <person name="Gygi S.P."/>
        </authorList>
    </citation>
    <scope>IDENTIFICATION BY MASS SPECTROMETRY [LARGE SCALE ANALYSIS]</scope>
    <source>
        <tissue>Lung</tissue>
    </source>
</reference>
<keyword id="KW-0175">Coiled coil</keyword>
<keyword id="KW-0963">Cytoplasm</keyword>
<keyword id="KW-0206">Cytoskeleton</keyword>
<keyword id="KW-0493">Microtubule</keyword>
<keyword id="KW-0597">Phosphoprotein</keyword>
<keyword id="KW-1185">Reference proteome</keyword>
<feature type="chain" id="PRO_0000288448" description="Nck-associated protein 5-like">
    <location>
        <begin position="1"/>
        <end position="1323"/>
    </location>
</feature>
<feature type="region of interest" description="Mediates interaction with CDK5RAP2 and is required for homodimerization and microtubule bundle formation" evidence="1">
    <location>
        <begin position="1"/>
        <end position="135"/>
    </location>
</feature>
<feature type="region of interest" description="Disordered" evidence="3">
    <location>
        <begin position="1"/>
        <end position="22"/>
    </location>
</feature>
<feature type="region of interest" description="Disordered" evidence="3">
    <location>
        <begin position="113"/>
        <end position="142"/>
    </location>
</feature>
<feature type="region of interest" description="Disordered" evidence="3">
    <location>
        <begin position="156"/>
        <end position="175"/>
    </location>
</feature>
<feature type="region of interest" description="Disordered" evidence="3">
    <location>
        <begin position="204"/>
        <end position="238"/>
    </location>
</feature>
<feature type="region of interest" description="Disordered" evidence="3">
    <location>
        <begin position="260"/>
        <end position="314"/>
    </location>
</feature>
<feature type="region of interest" description="Disordered" evidence="3">
    <location>
        <begin position="341"/>
        <end position="714"/>
    </location>
</feature>
<feature type="region of interest" description="Mediates interaction with beta-tubulin and is required for microtubule bundle formation" evidence="1">
    <location>
        <begin position="743"/>
        <end position="1136"/>
    </location>
</feature>
<feature type="region of interest" description="Disordered" evidence="3">
    <location>
        <begin position="778"/>
        <end position="875"/>
    </location>
</feature>
<feature type="region of interest" description="Disordered" evidence="3">
    <location>
        <begin position="892"/>
        <end position="948"/>
    </location>
</feature>
<feature type="region of interest" description="Disordered" evidence="3">
    <location>
        <begin position="979"/>
        <end position="1003"/>
    </location>
</feature>
<feature type="region of interest" description="Disordered" evidence="3">
    <location>
        <begin position="1027"/>
        <end position="1323"/>
    </location>
</feature>
<feature type="coiled-coil region" evidence="2">
    <location>
        <begin position="22"/>
        <end position="109"/>
    </location>
</feature>
<feature type="coiled-coil region" evidence="2">
    <location>
        <begin position="942"/>
        <end position="985"/>
    </location>
</feature>
<feature type="short sequence motif" description="(S/T)X(I/L)P motif 1" evidence="1">
    <location>
        <begin position="480"/>
        <end position="483"/>
    </location>
</feature>
<feature type="short sequence motif" description="(S/T)X(I/L)P motif 2" evidence="1">
    <location>
        <begin position="808"/>
        <end position="811"/>
    </location>
</feature>
<feature type="short sequence motif" description="(S/T)X(I/L)P motif 3; required for interaction with MAPRE1" evidence="1">
    <location>
        <begin position="918"/>
        <end position="921"/>
    </location>
</feature>
<feature type="compositionally biased region" description="Pro residues" evidence="3">
    <location>
        <begin position="162"/>
        <end position="172"/>
    </location>
</feature>
<feature type="compositionally biased region" description="Pro residues" evidence="3">
    <location>
        <begin position="226"/>
        <end position="236"/>
    </location>
</feature>
<feature type="compositionally biased region" description="Low complexity" evidence="3">
    <location>
        <begin position="271"/>
        <end position="298"/>
    </location>
</feature>
<feature type="compositionally biased region" description="Pro residues" evidence="3">
    <location>
        <begin position="353"/>
        <end position="364"/>
    </location>
</feature>
<feature type="compositionally biased region" description="Polar residues" evidence="3">
    <location>
        <begin position="531"/>
        <end position="542"/>
    </location>
</feature>
<feature type="compositionally biased region" description="Basic and acidic residues" evidence="3">
    <location>
        <begin position="647"/>
        <end position="660"/>
    </location>
</feature>
<feature type="compositionally biased region" description="Low complexity" evidence="3">
    <location>
        <begin position="799"/>
        <end position="817"/>
    </location>
</feature>
<feature type="compositionally biased region" description="Basic and acidic residues" evidence="3">
    <location>
        <begin position="925"/>
        <end position="934"/>
    </location>
</feature>
<feature type="compositionally biased region" description="Basic and acidic residues" evidence="3">
    <location>
        <begin position="1027"/>
        <end position="1041"/>
    </location>
</feature>
<feature type="compositionally biased region" description="Polar residues" evidence="3">
    <location>
        <begin position="1097"/>
        <end position="1112"/>
    </location>
</feature>
<feature type="compositionally biased region" description="Polar residues" evidence="3">
    <location>
        <begin position="1124"/>
        <end position="1136"/>
    </location>
</feature>
<feature type="compositionally biased region" description="Pro residues" evidence="3">
    <location>
        <begin position="1143"/>
        <end position="1153"/>
    </location>
</feature>
<feature type="compositionally biased region" description="Polar residues" evidence="3">
    <location>
        <begin position="1225"/>
        <end position="1237"/>
    </location>
</feature>
<feature type="compositionally biased region" description="Polar residues" evidence="3">
    <location>
        <begin position="1264"/>
        <end position="1273"/>
    </location>
</feature>
<feature type="compositionally biased region" description="Low complexity" evidence="3">
    <location>
        <begin position="1302"/>
        <end position="1323"/>
    </location>
</feature>
<feature type="modified residue" description="Phosphoserine; by CDK1" evidence="1">
    <location>
        <position position="436"/>
    </location>
</feature>
<feature type="modified residue" description="Phosphoserine; by CDK1" evidence="1">
    <location>
        <position position="447"/>
    </location>
</feature>
<feature type="modified residue" description="Phosphoserine; by CDK1" evidence="1">
    <location>
        <position position="466"/>
    </location>
</feature>
<feature type="modified residue" description="Phosphoserine; by CDK1" evidence="1">
    <location>
        <position position="473"/>
    </location>
</feature>
<feature type="modified residue" description="Phosphoserine" evidence="1">
    <location>
        <position position="489"/>
    </location>
</feature>
<feature type="modified residue" description="Phosphoserine" evidence="1">
    <location>
        <position position="492"/>
    </location>
</feature>
<feature type="modified residue" description="Phosphoserine" evidence="1">
    <location>
        <position position="494"/>
    </location>
</feature>
<feature type="modified residue" description="Phosphoserine; by CDK1" evidence="1">
    <location>
        <position position="573"/>
    </location>
</feature>
<feature type="modified residue" description="Phosphothreonine" evidence="1">
    <location>
        <position position="654"/>
    </location>
</feature>
<feature type="modified residue" description="Phosphoserine; by CDK1" evidence="1">
    <location>
        <position position="760"/>
    </location>
</feature>
<feature type="modified residue" description="Phosphoserine" evidence="1">
    <location>
        <position position="1184"/>
    </location>
</feature>
<feature type="sequence conflict" description="In Ref. 2; BAC33433." evidence="4" ref="2">
    <original>A</original>
    <variation>S</variation>
    <location>
        <position position="752"/>
    </location>
</feature>
<feature type="sequence conflict" description="In Ref. 1; AAH26468." evidence="4" ref="1">
    <original>T</original>
    <variation>A</variation>
    <location>
        <position position="1100"/>
    </location>
</feature>
<sequence>MDQPAGGTGKLRASAGEDDSMELSTCQELLHRLRELEAENSALAQANENQRETYERCLDEVANHVVQALLNQKDLREECIKLKKRVFDLERQNQVLSALLQQKLQLTANSLPQIPLTPLQPPSERPTSPAPNVSEGPATSLPSGLCAGQREVCWEQQLRPGGPGPPATPPPALDALSPFLRKKAQILEVLRALEETDPLLLCSPATPWRPTGQGPGSPEPINGEPCGPPQPEPSPWAPYLLLGPGSLGALLHWERVLGGPGEEEGIRQPWASSRAPPSAQGPSSGPHCAPGSSSSSSSDEAGDPNEAPSPDTLLGALARKQLNLGQLLGDTETYLQAFLAGATGPLSGDQPGPGKPNSPDPGPPQVSKSKGLPKSAWGASTPEATRLGFGATSEGQGPLPFLSMFMGAGDAPLGSRPGHPHSSSQVKSKLQIGPPSPGDAQGPLLPSPARGLKFLKLPPASEKVPSPGGPQLSPQLPRSSRIPCRNSGSDGSPSPLLARRGLGGGELSPEGAQGLPGSPLPCSAMPDSAQLRPSQSTVSTALSPGPVVSPCFENILDLSRSTFRGSPPEPPPSPLQVPTYPQLTLEVPQTPEVLRSPGAPSPGLPESCPYSGPQEKSMDRAGSESPHASRRTPGGSSKKPGQGSGRRPGDPSHTPLRDRLAALGKLKTGPEGPLGPEKNGVPARSSAEKARALVRSGECAGDVPPSARPLEQPEAKGIFRGAVALGTSSLKQQEPGLTDPGARVYSSHSMGARVDLEPISPRSCLTKVELAKSRLAGALCPQMPRTPAKVPTSAPSLGKPKSPHSSPTKLPSKSPTKVVPRPVVPLGTKEPPKPDKVKGPPWADCGSTVGQPTSPVAGPADPSQGSEGPAPHSAIEEKVMKGIEENVLRLQGQERTPGSEAKHRNTSSIASWFGLKKSKLPALNRRTEATKNKDGAGGGSPLRKEVKTEARKLEAESLNISKLMAKAEDLRRALEEEKAYLSRARPRPGGPATVPSPGLGQAQGQLAGMYQGADTFMQQLLNRVDGKELPPKSWREPKPEYGDFQPVSTDPKSPWPACGPRNGLVGPLQGCGKPGKPSSEPGRREEMPSEDSLAEPVSTTHFTACGSLTRTLDSGIGTFPPPDHSSSGTPSKNLPKTKSLRLDPPPGAPPARPPGLTKVPRRAHTLEREVPGIEELLVSGRHPSMPAFPGLLTAPPGHRSHQTCPDDPCEDPGPPPPVQLAKNWTFPNTRTAGSSSDPFLCPPRQLEGLPRTPMALPVDRKQSVDPSRTSTPQGPAFGGSRTPSTSDMGEEGRVASGGAPGLETSESLSDSLYDSLSSCGSQG</sequence>
<organism>
    <name type="scientific">Mus musculus</name>
    <name type="common">Mouse</name>
    <dbReference type="NCBI Taxonomy" id="10090"/>
    <lineage>
        <taxon>Eukaryota</taxon>
        <taxon>Metazoa</taxon>
        <taxon>Chordata</taxon>
        <taxon>Craniata</taxon>
        <taxon>Vertebrata</taxon>
        <taxon>Euteleostomi</taxon>
        <taxon>Mammalia</taxon>
        <taxon>Eutheria</taxon>
        <taxon>Euarchontoglires</taxon>
        <taxon>Glires</taxon>
        <taxon>Rodentia</taxon>
        <taxon>Myomorpha</taxon>
        <taxon>Muroidea</taxon>
        <taxon>Muridae</taxon>
        <taxon>Murinae</taxon>
        <taxon>Mus</taxon>
        <taxon>Mus</taxon>
    </lineage>
</organism>
<comment type="function">
    <text evidence="1">Regulates microtubule organization and stabilization. Promotes microtubule growth and bundling formation and stabilizes microtubules by increasing intense acetylation of microtubules. Both tubulin-binding and homodimer formation are required for NCKAP5L-mediated microtubule bundle formation.</text>
</comment>
<comment type="subunit">
    <text evidence="1">Homodimer. Interacts with CDK5RAP2. Interacts with MAPRE1. Interacts with beta-tubulin.</text>
</comment>
<comment type="subcellular location">
    <subcellularLocation>
        <location evidence="1">Cytoplasm</location>
        <location evidence="1">Cytoskeleton</location>
        <location evidence="1">Microtubule organizing center</location>
        <location evidence="1">Centrosome</location>
    </subcellularLocation>
    <text evidence="1">Localizes to microtubule plus ends. Associates with centrosomes during interphase, but dissociates from these structures from the onset of mitosis.</text>
</comment>
<comment type="PTM">
    <text evidence="1">CDK1/Cyclin B-dependent phosphorylation mediates its dissociation from centrosomes during mitosis.</text>
</comment>
<accession>Q6GQX2</accession>
<accession>Q8BX75</accession>
<accession>Q8R364</accession>